<evidence type="ECO:0000256" key="1">
    <source>
        <dbReference type="SAM" id="MobiDB-lite"/>
    </source>
</evidence>
<evidence type="ECO:0000305" key="2"/>
<evidence type="ECO:0000305" key="3">
    <source>
    </source>
</evidence>
<comment type="miscellaneous">
    <text evidence="2">Partially overlaps YDR456W.</text>
</comment>
<comment type="caution">
    <text evidence="3">Product of a dubious gene prediction unlikely to encode a functional protein. Because of that it is not part of the S.cerevisiae S288c complete/reference proteome set.</text>
</comment>
<reference key="1">
    <citation type="journal article" date="1997" name="Nature">
        <title>The nucleotide sequence of Saccharomyces cerevisiae chromosome IV.</title>
        <authorList>
            <person name="Jacq C."/>
            <person name="Alt-Moerbe J."/>
            <person name="Andre B."/>
            <person name="Arnold W."/>
            <person name="Bahr A."/>
            <person name="Ballesta J.P.G."/>
            <person name="Bargues M."/>
            <person name="Baron L."/>
            <person name="Becker A."/>
            <person name="Biteau N."/>
            <person name="Bloecker H."/>
            <person name="Blugeon C."/>
            <person name="Boskovic J."/>
            <person name="Brandt P."/>
            <person name="Brueckner M."/>
            <person name="Buitrago M.J."/>
            <person name="Coster F."/>
            <person name="Delaveau T."/>
            <person name="del Rey F."/>
            <person name="Dujon B."/>
            <person name="Eide L.G."/>
            <person name="Garcia-Cantalejo J.M."/>
            <person name="Goffeau A."/>
            <person name="Gomez-Peris A."/>
            <person name="Granotier C."/>
            <person name="Hanemann V."/>
            <person name="Hankeln T."/>
            <person name="Hoheisel J.D."/>
            <person name="Jaeger W."/>
            <person name="Jimenez A."/>
            <person name="Jonniaux J.-L."/>
            <person name="Kraemer C."/>
            <person name="Kuester H."/>
            <person name="Laamanen P."/>
            <person name="Legros Y."/>
            <person name="Louis E.J."/>
            <person name="Moeller-Rieker S."/>
            <person name="Monnet A."/>
            <person name="Moro M."/>
            <person name="Mueller-Auer S."/>
            <person name="Nussbaumer B."/>
            <person name="Paricio N."/>
            <person name="Paulin L."/>
            <person name="Perea J."/>
            <person name="Perez-Alonso M."/>
            <person name="Perez-Ortin J.E."/>
            <person name="Pohl T.M."/>
            <person name="Prydz H."/>
            <person name="Purnelle B."/>
            <person name="Rasmussen S.W."/>
            <person name="Remacha M.A."/>
            <person name="Revuelta J.L."/>
            <person name="Rieger M."/>
            <person name="Salom D."/>
            <person name="Saluz H.P."/>
            <person name="Saiz J.E."/>
            <person name="Saren A.-M."/>
            <person name="Schaefer M."/>
            <person name="Scharfe M."/>
            <person name="Schmidt E.R."/>
            <person name="Schneider C."/>
            <person name="Scholler P."/>
            <person name="Schwarz S."/>
            <person name="Soler-Mira A."/>
            <person name="Urrestarazu L.A."/>
            <person name="Verhasselt P."/>
            <person name="Vissers S."/>
            <person name="Voet M."/>
            <person name="Volckaert G."/>
            <person name="Wagner G."/>
            <person name="Wambutt R."/>
            <person name="Wedler E."/>
            <person name="Wedler H."/>
            <person name="Woelfl S."/>
            <person name="Harris D.E."/>
            <person name="Bowman S."/>
            <person name="Brown D."/>
            <person name="Churcher C.M."/>
            <person name="Connor R."/>
            <person name="Dedman K."/>
            <person name="Gentles S."/>
            <person name="Hamlin N."/>
            <person name="Hunt S."/>
            <person name="Jones L."/>
            <person name="McDonald S."/>
            <person name="Murphy L.D."/>
            <person name="Niblett D."/>
            <person name="Odell C."/>
            <person name="Oliver K."/>
            <person name="Rajandream M.A."/>
            <person name="Richards C."/>
            <person name="Shore L."/>
            <person name="Walsh S.V."/>
            <person name="Barrell B.G."/>
            <person name="Dietrich F.S."/>
            <person name="Mulligan J.T."/>
            <person name="Allen E."/>
            <person name="Araujo R."/>
            <person name="Aviles E."/>
            <person name="Berno A."/>
            <person name="Carpenter J."/>
            <person name="Chen E."/>
            <person name="Cherry J.M."/>
            <person name="Chung E."/>
            <person name="Duncan M."/>
            <person name="Hunicke-Smith S."/>
            <person name="Hyman R.W."/>
            <person name="Komp C."/>
            <person name="Lashkari D."/>
            <person name="Lew H."/>
            <person name="Lin D."/>
            <person name="Mosedale D."/>
            <person name="Nakahara K."/>
            <person name="Namath A."/>
            <person name="Oefner P."/>
            <person name="Oh C."/>
            <person name="Petel F.X."/>
            <person name="Roberts D."/>
            <person name="Schramm S."/>
            <person name="Schroeder M."/>
            <person name="Shogren T."/>
            <person name="Shroff N."/>
            <person name="Winant A."/>
            <person name="Yelton M.A."/>
            <person name="Botstein D."/>
            <person name="Davis R.W."/>
            <person name="Johnston M."/>
            <person name="Andrews S."/>
            <person name="Brinkman R."/>
            <person name="Cooper J."/>
            <person name="Ding H."/>
            <person name="Du Z."/>
            <person name="Favello A."/>
            <person name="Fulton L."/>
            <person name="Gattung S."/>
            <person name="Greco T."/>
            <person name="Hallsworth K."/>
            <person name="Hawkins J."/>
            <person name="Hillier L.W."/>
            <person name="Jier M."/>
            <person name="Johnson D."/>
            <person name="Johnston L."/>
            <person name="Kirsten J."/>
            <person name="Kucaba T."/>
            <person name="Langston Y."/>
            <person name="Latreille P."/>
            <person name="Le T."/>
            <person name="Mardis E."/>
            <person name="Menezes S."/>
            <person name="Miller N."/>
            <person name="Nhan M."/>
            <person name="Pauley A."/>
            <person name="Peluso D."/>
            <person name="Rifkin L."/>
            <person name="Riles L."/>
            <person name="Taich A."/>
            <person name="Trevaskis E."/>
            <person name="Vignati D."/>
            <person name="Wilcox L."/>
            <person name="Wohldman P."/>
            <person name="Vaudin M."/>
            <person name="Wilson R."/>
            <person name="Waterston R."/>
            <person name="Albermann K."/>
            <person name="Hani J."/>
            <person name="Heumann K."/>
            <person name="Kleine K."/>
            <person name="Mewes H.-W."/>
            <person name="Zollner A."/>
            <person name="Zaccaria P."/>
        </authorList>
    </citation>
    <scope>NUCLEOTIDE SEQUENCE [LARGE SCALE GENOMIC DNA]</scope>
    <source>
        <strain>ATCC 204508 / S288c</strain>
    </source>
</reference>
<reference key="2">
    <citation type="journal article" date="2014" name="G3 (Bethesda)">
        <title>The reference genome sequence of Saccharomyces cerevisiae: Then and now.</title>
        <authorList>
            <person name="Engel S.R."/>
            <person name="Dietrich F.S."/>
            <person name="Fisk D.G."/>
            <person name="Binkley G."/>
            <person name="Balakrishnan R."/>
            <person name="Costanzo M.C."/>
            <person name="Dwight S.S."/>
            <person name="Hitz B.C."/>
            <person name="Karra K."/>
            <person name="Nash R.S."/>
            <person name="Weng S."/>
            <person name="Wong E.D."/>
            <person name="Lloyd P."/>
            <person name="Skrzypek M.S."/>
            <person name="Miyasato S.R."/>
            <person name="Simison M."/>
            <person name="Cherry J.M."/>
        </authorList>
    </citation>
    <scope>GENOME REANNOTATION</scope>
    <source>
        <strain>ATCC 204508 / S288c</strain>
    </source>
</reference>
<proteinExistence type="uncertain"/>
<protein>
    <recommendedName>
        <fullName>Putative uncharacterized protein YDR455C</fullName>
    </recommendedName>
</protein>
<sequence length="102" mass="10691">MNNAHEENISSVTGFKSTSGSPAIGSSLPGRSGEGRSSSSSSGSTALLAVVNSTLKAIFSNTLDSIFHMVCTDSDKRLSSEFHCLQSMFNLQLFVNLGCPLS</sequence>
<accession>P87271</accession>
<name>YD455_YEAST</name>
<gene>
    <name type="ordered locus">YDR455C</name>
</gene>
<feature type="chain" id="PRO_0000299896" description="Putative uncharacterized protein YDR455C">
    <location>
        <begin position="1"/>
        <end position="102"/>
    </location>
</feature>
<feature type="region of interest" description="Disordered" evidence="1">
    <location>
        <begin position="1"/>
        <end position="43"/>
    </location>
</feature>
<feature type="compositionally biased region" description="Polar residues" evidence="1">
    <location>
        <begin position="9"/>
        <end position="21"/>
    </location>
</feature>
<feature type="compositionally biased region" description="Low complexity" evidence="1">
    <location>
        <begin position="25"/>
        <end position="43"/>
    </location>
</feature>
<organism>
    <name type="scientific">Saccharomyces cerevisiae (strain ATCC 204508 / S288c)</name>
    <name type="common">Baker's yeast</name>
    <dbReference type="NCBI Taxonomy" id="559292"/>
    <lineage>
        <taxon>Eukaryota</taxon>
        <taxon>Fungi</taxon>
        <taxon>Dikarya</taxon>
        <taxon>Ascomycota</taxon>
        <taxon>Saccharomycotina</taxon>
        <taxon>Saccharomycetes</taxon>
        <taxon>Saccharomycetales</taxon>
        <taxon>Saccharomycetaceae</taxon>
        <taxon>Saccharomyces</taxon>
    </lineage>
</organism>
<dbReference type="EMBL" id="U33007">
    <property type="protein sequence ID" value="AAB64898.1"/>
    <property type="molecule type" value="Genomic_DNA"/>
</dbReference>
<dbReference type="PIR" id="S69741">
    <property type="entry name" value="S69741"/>
</dbReference>
<dbReference type="DIP" id="DIP-2797N"/>
<dbReference type="IntAct" id="P87271">
    <property type="interactions" value="2"/>
</dbReference>
<dbReference type="MINT" id="P87271"/>
<dbReference type="STRING" id="4932.YDR455C"/>
<dbReference type="PaxDb" id="4932-YDR455C"/>
<dbReference type="EnsemblFungi" id="YDR455C_mRNA">
    <property type="protein sequence ID" value="YDR455C"/>
    <property type="gene ID" value="YDR455C"/>
</dbReference>
<dbReference type="AGR" id="SGD:S000002863"/>
<dbReference type="SGD" id="S000002863">
    <property type="gene designation" value="YDR455C"/>
</dbReference>
<dbReference type="HOGENOM" id="CLU_2279673_0_0_1"/>